<accession>O98637</accession>
<sequence length="509" mass="60344">MDKLQYELQGYLEIDRYRKQRFLYPLLFREYIYALAHDHGLNSSIFYEPTENLGYDNDNKSSSLIVKRLITRLHQQNHLTISVNDSRFVGPNRSFYSQTIPEGFAGIMEIPFSVRLVSSLERERIAKYHNLRSIHSIFPFLEDKLSHLYYVSDILIPYPIHLEILLQTLRTRIRDAPSLHLLRCFLHEHHNWNSLITSTSNKSISIFSKENQRLFLFLYNSHVYECESVLVFLRKQSSHLRSISSLAFLERTHFYGKIKHLVVTPRNDSQRTLPLWFFKEPLMHYVRYQGKSIMASRCTNLLMKKWKYYLVNFWQCHFHLWSQPGRIHINELSNHSFYFLGYLLGVRLTPWVIRSQMLENSFMIDTAIKRFDTIVPIFPLIGSLVKAKFCNVSGYPISKSVWADSSDSDIIARFGWICRNLSHYHSGSSKKHSLCRIKYILRLSCARTLARKHKSTVRAICKRLGSKLLEEFLTEEHEIVSFIFRRTRLRSERIWYLDIIRIHGLVPHS</sequence>
<evidence type="ECO:0000255" key="1">
    <source>
        <dbReference type="HAMAP-Rule" id="MF_01390"/>
    </source>
</evidence>
<protein>
    <recommendedName>
        <fullName evidence="1">Maturase K</fullName>
    </recommendedName>
    <alternativeName>
        <fullName evidence="1">Intron maturase</fullName>
    </alternativeName>
</protein>
<reference key="1">
    <citation type="journal article" date="1999" name="Syst. Bot.">
        <title>Phylogeny, classification and floral evolution of water lilies (Nymphaeaceae; Nymphaeales): a synthesis of non-molecular, rbcL, matK and 18S rDNA data.</title>
        <authorList>
            <person name="Les D.H."/>
            <person name="Schneider E.L."/>
            <person name="Padgett D.J."/>
            <person name="Soltis P.S."/>
            <person name="Soltis D.E."/>
            <person name="Zanis M."/>
        </authorList>
        <dbReference type="AGRICOLA" id="IND22004848"/>
    </citation>
    <scope>NUCLEOTIDE SEQUENCE [GENOMIC DNA]</scope>
</reference>
<name>MATK_NYMOD</name>
<keyword id="KW-0150">Chloroplast</keyword>
<keyword id="KW-0507">mRNA processing</keyword>
<keyword id="KW-0934">Plastid</keyword>
<keyword id="KW-0694">RNA-binding</keyword>
<keyword id="KW-0819">tRNA processing</keyword>
<dbReference type="EMBL" id="AF092988">
    <property type="protein sequence ID" value="AAD05556.1"/>
    <property type="molecule type" value="Genomic_DNA"/>
</dbReference>
<dbReference type="GO" id="GO:0009507">
    <property type="term" value="C:chloroplast"/>
    <property type="evidence" value="ECO:0007669"/>
    <property type="project" value="UniProtKB-SubCell"/>
</dbReference>
<dbReference type="GO" id="GO:0003723">
    <property type="term" value="F:RNA binding"/>
    <property type="evidence" value="ECO:0007669"/>
    <property type="project" value="UniProtKB-KW"/>
</dbReference>
<dbReference type="GO" id="GO:0006397">
    <property type="term" value="P:mRNA processing"/>
    <property type="evidence" value="ECO:0007669"/>
    <property type="project" value="UniProtKB-KW"/>
</dbReference>
<dbReference type="GO" id="GO:0008380">
    <property type="term" value="P:RNA splicing"/>
    <property type="evidence" value="ECO:0007669"/>
    <property type="project" value="UniProtKB-UniRule"/>
</dbReference>
<dbReference type="GO" id="GO:0008033">
    <property type="term" value="P:tRNA processing"/>
    <property type="evidence" value="ECO:0007669"/>
    <property type="project" value="UniProtKB-KW"/>
</dbReference>
<dbReference type="HAMAP" id="MF_01390">
    <property type="entry name" value="MatK"/>
    <property type="match status" value="1"/>
</dbReference>
<dbReference type="InterPro" id="IPR024937">
    <property type="entry name" value="Domain_X"/>
</dbReference>
<dbReference type="InterPro" id="IPR002866">
    <property type="entry name" value="Maturase_MatK"/>
</dbReference>
<dbReference type="InterPro" id="IPR024942">
    <property type="entry name" value="Maturase_MatK_N"/>
</dbReference>
<dbReference type="PANTHER" id="PTHR34811">
    <property type="entry name" value="MATURASE K"/>
    <property type="match status" value="1"/>
</dbReference>
<dbReference type="PANTHER" id="PTHR34811:SF1">
    <property type="entry name" value="MATURASE K"/>
    <property type="match status" value="1"/>
</dbReference>
<dbReference type="Pfam" id="PF01348">
    <property type="entry name" value="Intron_maturas2"/>
    <property type="match status" value="1"/>
</dbReference>
<dbReference type="Pfam" id="PF01824">
    <property type="entry name" value="MatK_N"/>
    <property type="match status" value="1"/>
</dbReference>
<feature type="chain" id="PRO_0000143552" description="Maturase K">
    <location>
        <begin position="1"/>
        <end position="509"/>
    </location>
</feature>
<proteinExistence type="inferred from homology"/>
<geneLocation type="chloroplast"/>
<organism>
    <name type="scientific">Nymphaea odorata</name>
    <name type="common">White water lily</name>
    <dbReference type="NCBI Taxonomy" id="4419"/>
    <lineage>
        <taxon>Eukaryota</taxon>
        <taxon>Viridiplantae</taxon>
        <taxon>Streptophyta</taxon>
        <taxon>Embryophyta</taxon>
        <taxon>Tracheophyta</taxon>
        <taxon>Spermatophyta</taxon>
        <taxon>Magnoliopsida</taxon>
        <taxon>Nymphaeales</taxon>
        <taxon>Nymphaeaceae</taxon>
        <taxon>Nymphaea</taxon>
    </lineage>
</organism>
<comment type="function">
    <text evidence="1">Usually encoded in the trnK tRNA gene intron. Probably assists in splicing its own and other chloroplast group II introns.</text>
</comment>
<comment type="subcellular location">
    <subcellularLocation>
        <location>Plastid</location>
        <location>Chloroplast</location>
    </subcellularLocation>
</comment>
<comment type="similarity">
    <text evidence="1">Belongs to the intron maturase 2 family. MatK subfamily.</text>
</comment>
<gene>
    <name evidence="1" type="primary">matK</name>
</gene>